<accession>Q5M2C5</accession>
<name>RL5_STRT2</name>
<dbReference type="EMBL" id="CP000023">
    <property type="protein sequence ID" value="AAV61520.1"/>
    <property type="molecule type" value="Genomic_DNA"/>
</dbReference>
<dbReference type="RefSeq" id="WP_002946163.1">
    <property type="nucleotide sequence ID" value="NC_006448.1"/>
</dbReference>
<dbReference type="SMR" id="Q5M2C5"/>
<dbReference type="STRING" id="264199.stu1922"/>
<dbReference type="GeneID" id="66899650"/>
<dbReference type="KEGG" id="stl:stu1922"/>
<dbReference type="eggNOG" id="COG0094">
    <property type="taxonomic scope" value="Bacteria"/>
</dbReference>
<dbReference type="HOGENOM" id="CLU_061015_2_1_9"/>
<dbReference type="Proteomes" id="UP000001170">
    <property type="component" value="Chromosome"/>
</dbReference>
<dbReference type="GO" id="GO:1990904">
    <property type="term" value="C:ribonucleoprotein complex"/>
    <property type="evidence" value="ECO:0007669"/>
    <property type="project" value="UniProtKB-KW"/>
</dbReference>
<dbReference type="GO" id="GO:0005840">
    <property type="term" value="C:ribosome"/>
    <property type="evidence" value="ECO:0007669"/>
    <property type="project" value="UniProtKB-KW"/>
</dbReference>
<dbReference type="GO" id="GO:0019843">
    <property type="term" value="F:rRNA binding"/>
    <property type="evidence" value="ECO:0007669"/>
    <property type="project" value="UniProtKB-UniRule"/>
</dbReference>
<dbReference type="GO" id="GO:0003735">
    <property type="term" value="F:structural constituent of ribosome"/>
    <property type="evidence" value="ECO:0007669"/>
    <property type="project" value="InterPro"/>
</dbReference>
<dbReference type="GO" id="GO:0000049">
    <property type="term" value="F:tRNA binding"/>
    <property type="evidence" value="ECO:0007669"/>
    <property type="project" value="UniProtKB-UniRule"/>
</dbReference>
<dbReference type="GO" id="GO:0006412">
    <property type="term" value="P:translation"/>
    <property type="evidence" value="ECO:0007669"/>
    <property type="project" value="UniProtKB-UniRule"/>
</dbReference>
<dbReference type="FunFam" id="3.30.1440.10:FF:000001">
    <property type="entry name" value="50S ribosomal protein L5"/>
    <property type="match status" value="1"/>
</dbReference>
<dbReference type="Gene3D" id="3.30.1440.10">
    <property type="match status" value="1"/>
</dbReference>
<dbReference type="HAMAP" id="MF_01333_B">
    <property type="entry name" value="Ribosomal_uL5_B"/>
    <property type="match status" value="1"/>
</dbReference>
<dbReference type="InterPro" id="IPR002132">
    <property type="entry name" value="Ribosomal_uL5"/>
</dbReference>
<dbReference type="InterPro" id="IPR020930">
    <property type="entry name" value="Ribosomal_uL5_bac-type"/>
</dbReference>
<dbReference type="InterPro" id="IPR031309">
    <property type="entry name" value="Ribosomal_uL5_C"/>
</dbReference>
<dbReference type="InterPro" id="IPR020929">
    <property type="entry name" value="Ribosomal_uL5_CS"/>
</dbReference>
<dbReference type="InterPro" id="IPR022803">
    <property type="entry name" value="Ribosomal_uL5_dom_sf"/>
</dbReference>
<dbReference type="InterPro" id="IPR031310">
    <property type="entry name" value="Ribosomal_uL5_N"/>
</dbReference>
<dbReference type="NCBIfam" id="NF000585">
    <property type="entry name" value="PRK00010.1"/>
    <property type="match status" value="1"/>
</dbReference>
<dbReference type="PANTHER" id="PTHR11994">
    <property type="entry name" value="60S RIBOSOMAL PROTEIN L11-RELATED"/>
    <property type="match status" value="1"/>
</dbReference>
<dbReference type="Pfam" id="PF00281">
    <property type="entry name" value="Ribosomal_L5"/>
    <property type="match status" value="1"/>
</dbReference>
<dbReference type="Pfam" id="PF00673">
    <property type="entry name" value="Ribosomal_L5_C"/>
    <property type="match status" value="1"/>
</dbReference>
<dbReference type="PIRSF" id="PIRSF002161">
    <property type="entry name" value="Ribosomal_L5"/>
    <property type="match status" value="1"/>
</dbReference>
<dbReference type="SUPFAM" id="SSF55282">
    <property type="entry name" value="RL5-like"/>
    <property type="match status" value="1"/>
</dbReference>
<dbReference type="PROSITE" id="PS00358">
    <property type="entry name" value="RIBOSOMAL_L5"/>
    <property type="match status" value="1"/>
</dbReference>
<proteinExistence type="inferred from homology"/>
<evidence type="ECO:0000255" key="1">
    <source>
        <dbReference type="HAMAP-Rule" id="MF_01333"/>
    </source>
</evidence>
<evidence type="ECO:0000305" key="2"/>
<feature type="chain" id="PRO_0000243071" description="Large ribosomal subunit protein uL5">
    <location>
        <begin position="1"/>
        <end position="180"/>
    </location>
</feature>
<sequence length="180" mass="19829">MANRLKEKYTNEVIPALTEQFNYSSVMAVPKVDKIVINMGVGEAVNNAKTLEKAAAELALISGQKPLITKAKKSIAGFRLREGVAIGAKVTLRGERMYEFLDKLVSVSLPRVRDFHGVPTKSFDGRGNYTLGVKEQLIFPEINFDNVDKVRGMDIVIVTTANTDEEGRELLKGLGMPFAK</sequence>
<keyword id="KW-1185">Reference proteome</keyword>
<keyword id="KW-0687">Ribonucleoprotein</keyword>
<keyword id="KW-0689">Ribosomal protein</keyword>
<keyword id="KW-0694">RNA-binding</keyword>
<keyword id="KW-0699">rRNA-binding</keyword>
<keyword id="KW-0820">tRNA-binding</keyword>
<organism>
    <name type="scientific">Streptococcus thermophilus (strain ATCC BAA-250 / LMG 18311)</name>
    <dbReference type="NCBI Taxonomy" id="264199"/>
    <lineage>
        <taxon>Bacteria</taxon>
        <taxon>Bacillati</taxon>
        <taxon>Bacillota</taxon>
        <taxon>Bacilli</taxon>
        <taxon>Lactobacillales</taxon>
        <taxon>Streptococcaceae</taxon>
        <taxon>Streptococcus</taxon>
    </lineage>
</organism>
<comment type="function">
    <text evidence="1">This is one of the proteins that bind and probably mediate the attachment of the 5S RNA into the large ribosomal subunit, where it forms part of the central protuberance. In the 70S ribosome it contacts protein S13 of the 30S subunit (bridge B1b), connecting the 2 subunits; this bridge is implicated in subunit movement. Contacts the P site tRNA; the 5S rRNA and some of its associated proteins might help stabilize positioning of ribosome-bound tRNAs.</text>
</comment>
<comment type="subunit">
    <text evidence="1">Part of the 50S ribosomal subunit; part of the 5S rRNA/L5/L18/L25 subcomplex. Contacts the 5S rRNA and the P site tRNA. Forms a bridge to the 30S subunit in the 70S ribosome.</text>
</comment>
<comment type="similarity">
    <text evidence="1">Belongs to the universal ribosomal protein uL5 family.</text>
</comment>
<gene>
    <name evidence="1" type="primary">rplE</name>
    <name type="ordered locus">stu1922</name>
</gene>
<protein>
    <recommendedName>
        <fullName evidence="1">Large ribosomal subunit protein uL5</fullName>
    </recommendedName>
    <alternativeName>
        <fullName evidence="2">50S ribosomal protein L5</fullName>
    </alternativeName>
</protein>
<reference key="1">
    <citation type="journal article" date="2004" name="Nat. Biotechnol.">
        <title>Complete sequence and comparative genome analysis of the dairy bacterium Streptococcus thermophilus.</title>
        <authorList>
            <person name="Bolotin A."/>
            <person name="Quinquis B."/>
            <person name="Renault P."/>
            <person name="Sorokin A."/>
            <person name="Ehrlich S.D."/>
            <person name="Kulakauskas S."/>
            <person name="Lapidus A."/>
            <person name="Goltsman E."/>
            <person name="Mazur M."/>
            <person name="Pusch G.D."/>
            <person name="Fonstein M."/>
            <person name="Overbeek R."/>
            <person name="Kyprides N."/>
            <person name="Purnelle B."/>
            <person name="Prozzi D."/>
            <person name="Ngui K."/>
            <person name="Masuy D."/>
            <person name="Hancy F."/>
            <person name="Burteau S."/>
            <person name="Boutry M."/>
            <person name="Delcour J."/>
            <person name="Goffeau A."/>
            <person name="Hols P."/>
        </authorList>
    </citation>
    <scope>NUCLEOTIDE SEQUENCE [LARGE SCALE GENOMIC DNA]</scope>
    <source>
        <strain>ATCC BAA-250 / LMG 18311</strain>
    </source>
</reference>